<comment type="function">
    <text evidence="1">Inhibits programmed -1 ribosomal frameshifting (-1PRF) of a variety of mRNAs from viruses and cellular genes. Interacts with the -1PRF signal of target mRNA and translating ribosomes and causes premature translation termination at the frameshifting site (By similarity). May exhibit antiviral activity (By similarity).</text>
</comment>
<comment type="subunit">
    <text evidence="1">Interacts with PABPC1. Found in a complex with PABPC1 and LARP1. Interacts with ELAV1, MOV10 and UPF1; the interactions increase in presence of RNA. Binds to ribosomes. Interacts with GSPT1.</text>
</comment>
<comment type="subcellular location">
    <subcellularLocation>
        <location evidence="1">Cytoplasm</location>
    </subcellularLocation>
    <subcellularLocation>
        <location evidence="1">Nucleus</location>
    </subcellularLocation>
    <subcellularLocation>
        <location evidence="1">Cytoplasm</location>
        <location evidence="1">P-body</location>
    </subcellularLocation>
    <text evidence="1">Predominantly found in the cytoplasm.</text>
</comment>
<comment type="similarity">
    <text evidence="3">Belongs to the SHFL family.</text>
</comment>
<organism>
    <name type="scientific">Bos taurus</name>
    <name type="common">Bovine</name>
    <dbReference type="NCBI Taxonomy" id="9913"/>
    <lineage>
        <taxon>Eukaryota</taxon>
        <taxon>Metazoa</taxon>
        <taxon>Chordata</taxon>
        <taxon>Craniata</taxon>
        <taxon>Vertebrata</taxon>
        <taxon>Euteleostomi</taxon>
        <taxon>Mammalia</taxon>
        <taxon>Eutheria</taxon>
        <taxon>Laurasiatheria</taxon>
        <taxon>Artiodactyla</taxon>
        <taxon>Ruminantia</taxon>
        <taxon>Pecora</taxon>
        <taxon>Bovidae</taxon>
        <taxon>Bovinae</taxon>
        <taxon>Bos</taxon>
    </lineage>
</organism>
<dbReference type="EMBL" id="BC109821">
    <property type="protein sequence ID" value="AAI09822.1"/>
    <property type="molecule type" value="mRNA"/>
</dbReference>
<dbReference type="RefSeq" id="NP_001033270.1">
    <property type="nucleotide sequence ID" value="NM_001038181.1"/>
</dbReference>
<dbReference type="FunCoup" id="Q32L09">
    <property type="interactions" value="144"/>
</dbReference>
<dbReference type="PaxDb" id="9913-ENSBTAP00000020765"/>
<dbReference type="Ensembl" id="ENSBTAT00000084842.2">
    <property type="protein sequence ID" value="ENSBTAP00000070425.1"/>
    <property type="gene ID" value="ENSBTAG00000015636.6"/>
</dbReference>
<dbReference type="GeneID" id="539087"/>
<dbReference type="KEGG" id="bta:539087"/>
<dbReference type="CTD" id="55337"/>
<dbReference type="VEuPathDB" id="HostDB:ENSBTAG00000015636"/>
<dbReference type="VGNC" id="VGNC:55202">
    <property type="gene designation" value="SHFL"/>
</dbReference>
<dbReference type="eggNOG" id="ENOG502QVND">
    <property type="taxonomic scope" value="Eukaryota"/>
</dbReference>
<dbReference type="GeneTree" id="ENSGT00390000005065"/>
<dbReference type="InParanoid" id="Q32L09"/>
<dbReference type="OMA" id="PVPKDKM"/>
<dbReference type="OrthoDB" id="9423182at2759"/>
<dbReference type="Proteomes" id="UP000009136">
    <property type="component" value="Chromosome 7"/>
</dbReference>
<dbReference type="Bgee" id="ENSBTAG00000015636">
    <property type="expression patterns" value="Expressed in monocyte and 104 other cell types or tissues"/>
</dbReference>
<dbReference type="GO" id="GO:0005737">
    <property type="term" value="C:cytoplasm"/>
    <property type="evidence" value="ECO:0000250"/>
    <property type="project" value="UniProtKB"/>
</dbReference>
<dbReference type="GO" id="GO:0005829">
    <property type="term" value="C:cytosol"/>
    <property type="evidence" value="ECO:0007669"/>
    <property type="project" value="Ensembl"/>
</dbReference>
<dbReference type="GO" id="GO:0005654">
    <property type="term" value="C:nucleoplasm"/>
    <property type="evidence" value="ECO:0007669"/>
    <property type="project" value="Ensembl"/>
</dbReference>
<dbReference type="GO" id="GO:0005634">
    <property type="term" value="C:nucleus"/>
    <property type="evidence" value="ECO:0000250"/>
    <property type="project" value="UniProtKB"/>
</dbReference>
<dbReference type="GO" id="GO:0000932">
    <property type="term" value="C:P-body"/>
    <property type="evidence" value="ECO:0007669"/>
    <property type="project" value="UniProtKB-SubCell"/>
</dbReference>
<dbReference type="GO" id="GO:0043022">
    <property type="term" value="F:ribosome binding"/>
    <property type="evidence" value="ECO:0000250"/>
    <property type="project" value="UniProtKB"/>
</dbReference>
<dbReference type="GO" id="GO:0003723">
    <property type="term" value="F:RNA binding"/>
    <property type="evidence" value="ECO:0000250"/>
    <property type="project" value="UniProtKB"/>
</dbReference>
<dbReference type="GO" id="GO:1990825">
    <property type="term" value="F:sequence-specific mRNA binding"/>
    <property type="evidence" value="ECO:0000250"/>
    <property type="project" value="UniProtKB"/>
</dbReference>
<dbReference type="GO" id="GO:0051607">
    <property type="term" value="P:defense response to virus"/>
    <property type="evidence" value="ECO:0000250"/>
    <property type="project" value="UniProtKB"/>
</dbReference>
<dbReference type="GO" id="GO:0045087">
    <property type="term" value="P:innate immune response"/>
    <property type="evidence" value="ECO:0000318"/>
    <property type="project" value="GO_Central"/>
</dbReference>
<dbReference type="GO" id="GO:2001125">
    <property type="term" value="P:negative regulation of translational frameshifting"/>
    <property type="evidence" value="ECO:0000250"/>
    <property type="project" value="UniProtKB"/>
</dbReference>
<dbReference type="GO" id="GO:0045071">
    <property type="term" value="P:negative regulation of viral genome replication"/>
    <property type="evidence" value="ECO:0000250"/>
    <property type="project" value="UniProtKB"/>
</dbReference>
<dbReference type="GO" id="GO:0006449">
    <property type="term" value="P:regulation of translational termination"/>
    <property type="evidence" value="ECO:0000250"/>
    <property type="project" value="UniProtKB"/>
</dbReference>
<dbReference type="GO" id="GO:0035456">
    <property type="term" value="P:response to interferon-beta"/>
    <property type="evidence" value="ECO:0007669"/>
    <property type="project" value="Ensembl"/>
</dbReference>
<dbReference type="GO" id="GO:0034340">
    <property type="term" value="P:response to type I interferon"/>
    <property type="evidence" value="ECO:0000250"/>
    <property type="project" value="UniProtKB"/>
</dbReference>
<dbReference type="GO" id="GO:0034341">
    <property type="term" value="P:response to type II interferon"/>
    <property type="evidence" value="ECO:0000250"/>
    <property type="project" value="UniProtKB"/>
</dbReference>
<dbReference type="GO" id="GO:0034342">
    <property type="term" value="P:response to type III interferon"/>
    <property type="evidence" value="ECO:0000250"/>
    <property type="project" value="UniProtKB"/>
</dbReference>
<dbReference type="GO" id="GO:0075523">
    <property type="term" value="P:viral translational frameshifting"/>
    <property type="evidence" value="ECO:0000250"/>
    <property type="project" value="UniProtKB"/>
</dbReference>
<dbReference type="InterPro" id="IPR026795">
    <property type="entry name" value="SHFL"/>
</dbReference>
<dbReference type="PANTHER" id="PTHR16135">
    <property type="entry name" value="REPRESSOR OF YIELD OF DENV PROTEIN"/>
    <property type="match status" value="1"/>
</dbReference>
<dbReference type="PANTHER" id="PTHR16135:SF2">
    <property type="entry name" value="SHIFTLESS ANTIVIRAL INHIBITOR OF RIBOSOMAL FRAMESHIFTING PROTEIN"/>
    <property type="match status" value="1"/>
</dbReference>
<dbReference type="Pfam" id="PF15135">
    <property type="entry name" value="UPF0515"/>
    <property type="match status" value="1"/>
</dbReference>
<proteinExistence type="evidence at transcript level"/>
<keyword id="KW-0007">Acetylation</keyword>
<keyword id="KW-0051">Antiviral defense</keyword>
<keyword id="KW-0963">Cytoplasm</keyword>
<keyword id="KW-0539">Nucleus</keyword>
<keyword id="KW-1185">Reference proteome</keyword>
<keyword id="KW-0694">RNA-binding</keyword>
<protein>
    <recommendedName>
        <fullName evidence="3">Shiftless antiviral inhibitor of ribosomal frameshifting protein homolog</fullName>
        <shortName evidence="3">SHFL</shortName>
    </recommendedName>
    <alternativeName>
        <fullName evidence="1">Repressor of yield of DENV protein homolog</fullName>
        <shortName evidence="1">RyDEN</shortName>
    </alternativeName>
</protein>
<accession>Q32L09</accession>
<gene>
    <name type="primary">SHFL</name>
    <name evidence="1" type="synonym">RYDEN</name>
</gene>
<evidence type="ECO:0000250" key="1">
    <source>
        <dbReference type="UniProtKB" id="Q9NUL5"/>
    </source>
</evidence>
<evidence type="ECO:0000256" key="2">
    <source>
        <dbReference type="SAM" id="MobiDB-lite"/>
    </source>
</evidence>
<evidence type="ECO:0000305" key="3"/>
<reference key="1">
    <citation type="submission" date="2005-11" db="EMBL/GenBank/DDBJ databases">
        <authorList>
            <consortium name="NIH - Mammalian Gene Collection (MGC) project"/>
        </authorList>
    </citation>
    <scope>NUCLEOTIDE SEQUENCE [LARGE SCALE MRNA]</scope>
    <source>
        <strain>Crossbred X Angus</strain>
        <tissue>Liver</tissue>
    </source>
</reference>
<name>SHFL_BOVIN</name>
<feature type="initiator methionine" description="Removed" evidence="1">
    <location>
        <position position="1"/>
    </location>
</feature>
<feature type="chain" id="PRO_0000318700" description="Shiftless antiviral inhibitor of ribosomal frameshifting protein homolog">
    <location>
        <begin position="2"/>
        <end position="290"/>
    </location>
</feature>
<feature type="region of interest" description="Disordered" evidence="2">
    <location>
        <begin position="49"/>
        <end position="71"/>
    </location>
</feature>
<feature type="region of interest" description="Interaction with PABPC1" evidence="1">
    <location>
        <begin position="102"/>
        <end position="150"/>
    </location>
</feature>
<feature type="region of interest" description="Disordered" evidence="2">
    <location>
        <begin position="269"/>
        <end position="290"/>
    </location>
</feature>
<feature type="short sequence motif" description="Nuclear localization signal" evidence="1">
    <location>
        <begin position="121"/>
        <end position="137"/>
    </location>
</feature>
<feature type="short sequence motif" description="Nuclear export signal" evidence="1">
    <location>
        <begin position="261"/>
        <end position="269"/>
    </location>
</feature>
<feature type="compositionally biased region" description="Acidic residues" evidence="2">
    <location>
        <begin position="272"/>
        <end position="290"/>
    </location>
</feature>
<feature type="modified residue" description="N-acetylserine" evidence="1">
    <location>
        <position position="2"/>
    </location>
</feature>
<sequence>MSQEGVELEKSVRRLREKFHGKVSSKKAGTLMRKFGSDHTGVGRSIVYGVKQKDGQELSNDLDTQDPPEDMKQDRDIQAVATSLLPLTEDNLRMFQRAQEDLIPAVDRQFACSSCDHVWWRRVPQRKEVSRCRKCRKRYDPVPSDKMWGVAEFHCPKCRHNFRGWAQMGSRSPCYGCGFPVYPTRILPPRWDRDPDRRSTHTHSCSAEDCYNRREPHVPGTSCAHPKSRKQNHLPKVLHPSNLHISSGSTVATCLSQGGLLEDLDNLILEDLKEEEEEEEEEEEEGGHGE</sequence>